<keyword id="KW-0131">Cell cycle</keyword>
<keyword id="KW-0132">Cell division</keyword>
<keyword id="KW-0963">Cytoplasm</keyword>
<keyword id="KW-0469">Meiosis</keyword>
<keyword id="KW-0479">Metal-binding</keyword>
<keyword id="KW-0498">Mitosis</keyword>
<keyword id="KW-0539">Nucleus</keyword>
<keyword id="KW-1185">Reference proteome</keyword>
<keyword id="KW-0810">Translation regulation</keyword>
<reference key="1">
    <citation type="journal article" date="1995" name="Development">
        <title>The pelota locus encodes a protein required for meiotic cell division: an analysis of G2/M arrest in Drosophila spermatogenesis.</title>
        <authorList>
            <person name="Eberhart C.G."/>
            <person name="Wasserman S.W."/>
        </authorList>
    </citation>
    <scope>NUCLEOTIDE SEQUENCE [MRNA]</scope>
    <scope>FUNCTION</scope>
    <scope>TISSUE SPECIFICITY</scope>
    <scope>DEVELOPMENTAL STAGE</scope>
    <source>
        <tissue>Testis</tissue>
    </source>
</reference>
<reference key="2">
    <citation type="journal article" date="2000" name="Science">
        <title>The genome sequence of Drosophila melanogaster.</title>
        <authorList>
            <person name="Adams M.D."/>
            <person name="Celniker S.E."/>
            <person name="Holt R.A."/>
            <person name="Evans C.A."/>
            <person name="Gocayne J.D."/>
            <person name="Amanatides P.G."/>
            <person name="Scherer S.E."/>
            <person name="Li P.W."/>
            <person name="Hoskins R.A."/>
            <person name="Galle R.F."/>
            <person name="George R.A."/>
            <person name="Lewis S.E."/>
            <person name="Richards S."/>
            <person name="Ashburner M."/>
            <person name="Henderson S.N."/>
            <person name="Sutton G.G."/>
            <person name="Wortman J.R."/>
            <person name="Yandell M.D."/>
            <person name="Zhang Q."/>
            <person name="Chen L.X."/>
            <person name="Brandon R.C."/>
            <person name="Rogers Y.-H.C."/>
            <person name="Blazej R.G."/>
            <person name="Champe M."/>
            <person name="Pfeiffer B.D."/>
            <person name="Wan K.H."/>
            <person name="Doyle C."/>
            <person name="Baxter E.G."/>
            <person name="Helt G."/>
            <person name="Nelson C.R."/>
            <person name="Miklos G.L.G."/>
            <person name="Abril J.F."/>
            <person name="Agbayani A."/>
            <person name="An H.-J."/>
            <person name="Andrews-Pfannkoch C."/>
            <person name="Baldwin D."/>
            <person name="Ballew R.M."/>
            <person name="Basu A."/>
            <person name="Baxendale J."/>
            <person name="Bayraktaroglu L."/>
            <person name="Beasley E.M."/>
            <person name="Beeson K.Y."/>
            <person name="Benos P.V."/>
            <person name="Berman B.P."/>
            <person name="Bhandari D."/>
            <person name="Bolshakov S."/>
            <person name="Borkova D."/>
            <person name="Botchan M.R."/>
            <person name="Bouck J."/>
            <person name="Brokstein P."/>
            <person name="Brottier P."/>
            <person name="Burtis K.C."/>
            <person name="Busam D.A."/>
            <person name="Butler H."/>
            <person name="Cadieu E."/>
            <person name="Center A."/>
            <person name="Chandra I."/>
            <person name="Cherry J.M."/>
            <person name="Cawley S."/>
            <person name="Dahlke C."/>
            <person name="Davenport L.B."/>
            <person name="Davies P."/>
            <person name="de Pablos B."/>
            <person name="Delcher A."/>
            <person name="Deng Z."/>
            <person name="Mays A.D."/>
            <person name="Dew I."/>
            <person name="Dietz S.M."/>
            <person name="Dodson K."/>
            <person name="Doup L.E."/>
            <person name="Downes M."/>
            <person name="Dugan-Rocha S."/>
            <person name="Dunkov B.C."/>
            <person name="Dunn P."/>
            <person name="Durbin K.J."/>
            <person name="Evangelista C.C."/>
            <person name="Ferraz C."/>
            <person name="Ferriera S."/>
            <person name="Fleischmann W."/>
            <person name="Fosler C."/>
            <person name="Gabrielian A.E."/>
            <person name="Garg N.S."/>
            <person name="Gelbart W.M."/>
            <person name="Glasser K."/>
            <person name="Glodek A."/>
            <person name="Gong F."/>
            <person name="Gorrell J.H."/>
            <person name="Gu Z."/>
            <person name="Guan P."/>
            <person name="Harris M."/>
            <person name="Harris N.L."/>
            <person name="Harvey D.A."/>
            <person name="Heiman T.J."/>
            <person name="Hernandez J.R."/>
            <person name="Houck J."/>
            <person name="Hostin D."/>
            <person name="Houston K.A."/>
            <person name="Howland T.J."/>
            <person name="Wei M.-H."/>
            <person name="Ibegwam C."/>
            <person name="Jalali M."/>
            <person name="Kalush F."/>
            <person name="Karpen G.H."/>
            <person name="Ke Z."/>
            <person name="Kennison J.A."/>
            <person name="Ketchum K.A."/>
            <person name="Kimmel B.E."/>
            <person name="Kodira C.D."/>
            <person name="Kraft C.L."/>
            <person name="Kravitz S."/>
            <person name="Kulp D."/>
            <person name="Lai Z."/>
            <person name="Lasko P."/>
            <person name="Lei Y."/>
            <person name="Levitsky A.A."/>
            <person name="Li J.H."/>
            <person name="Li Z."/>
            <person name="Liang Y."/>
            <person name="Lin X."/>
            <person name="Liu X."/>
            <person name="Mattei B."/>
            <person name="McIntosh T.C."/>
            <person name="McLeod M.P."/>
            <person name="McPherson D."/>
            <person name="Merkulov G."/>
            <person name="Milshina N.V."/>
            <person name="Mobarry C."/>
            <person name="Morris J."/>
            <person name="Moshrefi A."/>
            <person name="Mount S.M."/>
            <person name="Moy M."/>
            <person name="Murphy B."/>
            <person name="Murphy L."/>
            <person name="Muzny D.M."/>
            <person name="Nelson D.L."/>
            <person name="Nelson D.R."/>
            <person name="Nelson K.A."/>
            <person name="Nixon K."/>
            <person name="Nusskern D.R."/>
            <person name="Pacleb J.M."/>
            <person name="Palazzolo M."/>
            <person name="Pittman G.S."/>
            <person name="Pan S."/>
            <person name="Pollard J."/>
            <person name="Puri V."/>
            <person name="Reese M.G."/>
            <person name="Reinert K."/>
            <person name="Remington K."/>
            <person name="Saunders R.D.C."/>
            <person name="Scheeler F."/>
            <person name="Shen H."/>
            <person name="Shue B.C."/>
            <person name="Siden-Kiamos I."/>
            <person name="Simpson M."/>
            <person name="Skupski M.P."/>
            <person name="Smith T.J."/>
            <person name="Spier E."/>
            <person name="Spradling A.C."/>
            <person name="Stapleton M."/>
            <person name="Strong R."/>
            <person name="Sun E."/>
            <person name="Svirskas R."/>
            <person name="Tector C."/>
            <person name="Turner R."/>
            <person name="Venter E."/>
            <person name="Wang A.H."/>
            <person name="Wang X."/>
            <person name="Wang Z.-Y."/>
            <person name="Wassarman D.A."/>
            <person name="Weinstock G.M."/>
            <person name="Weissenbach J."/>
            <person name="Williams S.M."/>
            <person name="Woodage T."/>
            <person name="Worley K.C."/>
            <person name="Wu D."/>
            <person name="Yang S."/>
            <person name="Yao Q.A."/>
            <person name="Ye J."/>
            <person name="Yeh R.-F."/>
            <person name="Zaveri J.S."/>
            <person name="Zhan M."/>
            <person name="Zhang G."/>
            <person name="Zhao Q."/>
            <person name="Zheng L."/>
            <person name="Zheng X.H."/>
            <person name="Zhong F.N."/>
            <person name="Zhong W."/>
            <person name="Zhou X."/>
            <person name="Zhu S.C."/>
            <person name="Zhu X."/>
            <person name="Smith H.O."/>
            <person name="Gibbs R.A."/>
            <person name="Myers E.W."/>
            <person name="Rubin G.M."/>
            <person name="Venter J.C."/>
        </authorList>
    </citation>
    <scope>NUCLEOTIDE SEQUENCE [LARGE SCALE GENOMIC DNA]</scope>
    <source>
        <strain>Berkeley</strain>
    </source>
</reference>
<reference key="3">
    <citation type="journal article" date="2002" name="Genome Biol.">
        <title>Annotation of the Drosophila melanogaster euchromatic genome: a systematic review.</title>
        <authorList>
            <person name="Misra S."/>
            <person name="Crosby M.A."/>
            <person name="Mungall C.J."/>
            <person name="Matthews B.B."/>
            <person name="Campbell K.S."/>
            <person name="Hradecky P."/>
            <person name="Huang Y."/>
            <person name="Kaminker J.S."/>
            <person name="Millburn G.H."/>
            <person name="Prochnik S.E."/>
            <person name="Smith C.D."/>
            <person name="Tupy J.L."/>
            <person name="Whitfield E.J."/>
            <person name="Bayraktaroglu L."/>
            <person name="Berman B.P."/>
            <person name="Bettencourt B.R."/>
            <person name="Celniker S.E."/>
            <person name="de Grey A.D.N.J."/>
            <person name="Drysdale R.A."/>
            <person name="Harris N.L."/>
            <person name="Richter J."/>
            <person name="Russo S."/>
            <person name="Schroeder A.J."/>
            <person name="Shu S.Q."/>
            <person name="Stapleton M."/>
            <person name="Yamada C."/>
            <person name="Ashburner M."/>
            <person name="Gelbart W.M."/>
            <person name="Rubin G.M."/>
            <person name="Lewis S.E."/>
        </authorList>
    </citation>
    <scope>GENOME REANNOTATION</scope>
    <source>
        <strain>Berkeley</strain>
    </source>
</reference>
<reference key="4">
    <citation type="journal article" date="2002" name="Genome Biol.">
        <title>A Drosophila full-length cDNA resource.</title>
        <authorList>
            <person name="Stapleton M."/>
            <person name="Carlson J.W."/>
            <person name="Brokstein P."/>
            <person name="Yu C."/>
            <person name="Champe M."/>
            <person name="George R.A."/>
            <person name="Guarin H."/>
            <person name="Kronmiller B."/>
            <person name="Pacleb J.M."/>
            <person name="Park S."/>
            <person name="Wan K.H."/>
            <person name="Rubin G.M."/>
            <person name="Celniker S.E."/>
        </authorList>
    </citation>
    <scope>NUCLEOTIDE SEQUENCE [LARGE SCALE MRNA]</scope>
    <source>
        <strain>Berkeley</strain>
        <tissue>Embryo</tissue>
    </source>
</reference>
<reference key="5">
    <citation type="journal article" date="2005" name="Development">
        <title>Pelota controls self-renewal of germline stem cells by repressing a Bam-independent differentiation pathway.</title>
        <authorList>
            <person name="Xi R."/>
            <person name="Doan C."/>
            <person name="Liu D."/>
            <person name="Xie T."/>
        </authorList>
    </citation>
    <scope>FUNCTION</scope>
    <scope>SUBCELLULAR LOCATION</scope>
</reference>
<reference key="6">
    <citation type="journal article" date="2015" name="EMBO Rep.">
        <title>The RNA surveillance complex Pelo-Hbs1 is required for transposon silencing in the Drosophila germline.</title>
        <authorList>
            <person name="Yang F."/>
            <person name="Zhao R."/>
            <person name="Fang X."/>
            <person name="Huang H."/>
            <person name="Xuan Y."/>
            <person name="Ma Y."/>
            <person name="Chen H."/>
            <person name="Cai T."/>
            <person name="Qi Y."/>
            <person name="Xi R."/>
        </authorList>
    </citation>
    <scope>FUNCTION</scope>
    <scope>INTERACTION WITH HBS1</scope>
    <scope>TISSUE SPECIFICITY</scope>
    <scope>DISRUPTION PHENOTYPE</scope>
    <scope>MUTAGENESIS OF PRO-210</scope>
</reference>
<reference key="7">
    <citation type="journal article" date="2018" name="Cell Metab.">
        <title>Ubiquitination of ABCE1 by NOT4 in Response to Mitochondrial Damage Links Co-translational Quality Control to PINK1-Directed Mitophagy.</title>
        <authorList>
            <person name="Wu Z."/>
            <person name="Wang Y."/>
            <person name="Lim J."/>
            <person name="Liu B."/>
            <person name="Li Y."/>
            <person name="Vartak R."/>
            <person name="Stankiewicz T."/>
            <person name="Montgomery S."/>
            <person name="Lu B."/>
        </authorList>
    </citation>
    <scope>FUNCTION</scope>
    <scope>INTERACTION WITH PINK1 AND CNOT4</scope>
    <scope>TISSUE SPECIFICITY</scope>
</reference>
<reference key="8">
    <citation type="journal article" date="2019" name="Sci. Rep.">
        <title>Pelota-interacting G protein Hbs1 is required for spermatogenesis in Drosophila.</title>
        <authorList>
            <person name="Li Z."/>
            <person name="Yang F."/>
            <person name="Xuan Y."/>
            <person name="Xi R."/>
            <person name="Zhao R."/>
        </authorList>
    </citation>
    <scope>FUNCTION</scope>
    <scope>INTERACTION WITH HSB1</scope>
    <scope>SUBCELLULAR LOCATION</scope>
    <scope>DISRUPTION PHENOTYPE</scope>
    <scope>MUTAGENESIS OF PRO-210</scope>
</reference>
<proteinExistence type="evidence at protein level"/>
<sequence>MKLLGKYVDKGMQGNVTLVPEESEDMWHAYNLIAKGDSVRSTTIRKVQNETATGSSTSSRVRTTLTIAVESIDFDTQACVLRLKGRNIEENQYVKMGAYHTLDLELNRKFELRKPEWDTIALERIEMACDPTQSADVAAVVMQEGLAHVCLITASMTLVRSKIEVSIPRKRKGSVQQHEKGLAKFYEQVMQSILRHVNFDVVKCVLIASPGFVRDQFYDYMFQQAVKMDYKLLLDNKSKFMLVHASSGFKHSLREILQDPAVLAKMSDTKAAGEVKALEQFYMMLQCEPAKAFYGKKHVLQAAESQAIETLLISDNLFRCQDVSLRKEYVNLVESIRDAGGEVKIFSSMHISGEQLAQLTGIAALLRFPMPELEDSDDDDDEDGAAGGVADSDSD</sequence>
<gene>
    <name type="primary">pelo</name>
    <name type="ORF">CG3959</name>
</gene>
<comment type="function">
    <text evidence="2 4 5 6 7 8">Component of the Pelota-HBS1L complex, a complex that recognizes stalled ribosomes and triggers the No-Go Decay (NGD) pathway (PubMed:29861391). In the Pelota-HBS1L complex, pelo recognizes ribosomes stalled at the 3' end of an mRNA and engages stalled ribosomes by destabilizing mRNA in the mRNA channel. Following ribosome-binding, the Pelota-HBS1L complex promotes recruitment of pix, which drives the disassembly of stalled ribosomes, followed by degradation of damaged mRNAs as part of the NGD pathway (By similarity). Required prior to the first meiotic division for spindle formation and nuclear envelope breakdown during spermatogenesis (PubMed:7588080). Together with HBS1, promotes spermatid individualization during spermatogenesis (PubMed:30824860). Required for ovarian germ line stem cell self-renewal and oocyte development during oogenesis (PubMed:16280348). Together with HSB1, required for transposon silencing in the ovary and testis (PubMed:26124316). As part of the Pink1-regulated signaling, is recruited to damaged mitochondrial and is required for recruitment of autophagy receptors and induction of mitophagy (PubMed:29861391). Required for normal eye patterning and for mitotic divisions in the ovary (PubMed:7588080).</text>
</comment>
<comment type="cofactor">
    <cofactor evidence="1">
        <name>a divalent metal cation</name>
        <dbReference type="ChEBI" id="CHEBI:60240"/>
    </cofactor>
</comment>
<comment type="subunit">
    <text evidence="5 6 7">Component of the Pelota-HBS1L complex, also named Dom34-Hbs1 complex, composed of pelo and HBS1 (PubMed:26124316, PubMed:30824860). Interacts with Pink1 and Cnot4; the interaction with Cnot4 appears to be Pink1-dependent (PubMed:29861391).</text>
</comment>
<comment type="subcellular location">
    <subcellularLocation>
        <location evidence="7">Nucleus</location>
    </subcellularLocation>
    <subcellularLocation>
        <location evidence="4 7">Cytoplasm</location>
    </subcellularLocation>
</comment>
<comment type="tissue specificity">
    <text evidence="5 6 8">Expressed in ovaries and muscles (at protein level) (PubMed:26124316, PubMed:29861391). Expressed throughout all development stages (PubMed:7588080).</text>
</comment>
<comment type="developmental stage">
    <text evidence="8">Highest levels in early embryo (0-2h) and adult stages.</text>
</comment>
<comment type="domain">
    <text evidence="5">The PGF motif may be involved in the interaction with HBS1 and is required for silencing of germline transposons.</text>
</comment>
<comment type="disruption phenotype">
    <text evidence="5 7">During spermatogenesis results in blockage of cell division preventing spermatocytes to enter meiosis and lack of spermatic individualization resulting in sterility (PubMed:30824860). In germlines, increases transposable elements transcription at both mRNA and protein levels (PubMed:26124316).</text>
</comment>
<comment type="similarity">
    <text evidence="9">Belongs to the eukaryotic release factor 1 family. Pelota subfamily.</text>
</comment>
<evidence type="ECO:0000250" key="1">
    <source>
        <dbReference type="UniProtKB" id="P33309"/>
    </source>
</evidence>
<evidence type="ECO:0000250" key="2">
    <source>
        <dbReference type="UniProtKB" id="Q9BRX2"/>
    </source>
</evidence>
<evidence type="ECO:0000256" key="3">
    <source>
        <dbReference type="SAM" id="MobiDB-lite"/>
    </source>
</evidence>
<evidence type="ECO:0000269" key="4">
    <source>
    </source>
</evidence>
<evidence type="ECO:0000269" key="5">
    <source>
    </source>
</evidence>
<evidence type="ECO:0000269" key="6">
    <source>
    </source>
</evidence>
<evidence type="ECO:0000269" key="7">
    <source>
    </source>
</evidence>
<evidence type="ECO:0000269" key="8">
    <source>
    </source>
</evidence>
<evidence type="ECO:0000305" key="9"/>
<name>PELO_DROME</name>
<protein>
    <recommendedName>
        <fullName>Protein pelota</fullName>
    </recommendedName>
</protein>
<organism>
    <name type="scientific">Drosophila melanogaster</name>
    <name type="common">Fruit fly</name>
    <dbReference type="NCBI Taxonomy" id="7227"/>
    <lineage>
        <taxon>Eukaryota</taxon>
        <taxon>Metazoa</taxon>
        <taxon>Ecdysozoa</taxon>
        <taxon>Arthropoda</taxon>
        <taxon>Hexapoda</taxon>
        <taxon>Insecta</taxon>
        <taxon>Pterygota</taxon>
        <taxon>Neoptera</taxon>
        <taxon>Endopterygota</taxon>
        <taxon>Diptera</taxon>
        <taxon>Brachycera</taxon>
        <taxon>Muscomorpha</taxon>
        <taxon>Ephydroidea</taxon>
        <taxon>Drosophilidae</taxon>
        <taxon>Drosophila</taxon>
        <taxon>Sophophora</taxon>
    </lineage>
</organism>
<feature type="chain" id="PRO_0000143190" description="Protein pelota">
    <location>
        <begin position="1"/>
        <end position="395"/>
    </location>
</feature>
<feature type="region of interest" description="Disordered" evidence="3">
    <location>
        <begin position="371"/>
        <end position="395"/>
    </location>
</feature>
<feature type="short sequence motif" description="PGF motif" evidence="5">
    <location>
        <begin position="210"/>
        <end position="212"/>
    </location>
</feature>
<feature type="compositionally biased region" description="Acidic residues" evidence="3">
    <location>
        <begin position="372"/>
        <end position="384"/>
    </location>
</feature>
<feature type="mutagenesis site" description="Reduces ability to repress transposon levels. Unable to rescue spermatogenesis defects in null mutants. Rescues germ stem cells defects in null mutants." evidence="5 7">
    <original>P</original>
    <variation>A</variation>
    <location>
        <position position="210"/>
    </location>
</feature>
<feature type="sequence conflict" description="In Ref. 1; AAC46879." evidence="9" ref="1">
    <original>L</original>
    <variation>V</variation>
    <location>
        <position position="81"/>
    </location>
</feature>
<feature type="sequence conflict" description="In Ref. 1; AAC46879." evidence="9" ref="1">
    <original>N</original>
    <variation>D</variation>
    <location>
        <position position="198"/>
    </location>
</feature>
<feature type="sequence conflict" description="In Ref. 1; AAC46879." evidence="9" ref="1">
    <original>V</original>
    <variation>A</variation>
    <location>
        <position position="389"/>
    </location>
</feature>
<dbReference type="EMBL" id="U27197">
    <property type="protein sequence ID" value="AAC46879.1"/>
    <property type="molecule type" value="mRNA"/>
</dbReference>
<dbReference type="EMBL" id="AY058644">
    <property type="protein sequence ID" value="AAL13873.1"/>
    <property type="molecule type" value="mRNA"/>
</dbReference>
<dbReference type="EMBL" id="AE014134">
    <property type="protein sequence ID" value="AAF52799.1"/>
    <property type="molecule type" value="Genomic_DNA"/>
</dbReference>
<dbReference type="PIR" id="T47122">
    <property type="entry name" value="T47122"/>
</dbReference>
<dbReference type="RefSeq" id="NP_476982.1">
    <property type="nucleotide sequence ID" value="NM_057634.5"/>
</dbReference>
<dbReference type="SMR" id="P48612"/>
<dbReference type="BioGRID" id="60384">
    <property type="interactions" value="12"/>
</dbReference>
<dbReference type="FunCoup" id="P48612">
    <property type="interactions" value="1920"/>
</dbReference>
<dbReference type="IntAct" id="P48612">
    <property type="interactions" value="3"/>
</dbReference>
<dbReference type="STRING" id="7227.FBpp0079444"/>
<dbReference type="PaxDb" id="7227-FBpp0079444"/>
<dbReference type="DNASU" id="34286"/>
<dbReference type="EnsemblMetazoa" id="FBtr0079847">
    <property type="protein sequence ID" value="FBpp0079444"/>
    <property type="gene ID" value="FBgn0011207"/>
</dbReference>
<dbReference type="GeneID" id="34286"/>
<dbReference type="KEGG" id="dme:Dmel_CG3959"/>
<dbReference type="UCSC" id="CG3959-RA">
    <property type="organism name" value="d. melanogaster"/>
</dbReference>
<dbReference type="AGR" id="FB:FBgn0011207"/>
<dbReference type="CTD" id="53918"/>
<dbReference type="FlyBase" id="FBgn0011207">
    <property type="gene designation" value="pelo"/>
</dbReference>
<dbReference type="VEuPathDB" id="VectorBase:FBgn0011207"/>
<dbReference type="eggNOG" id="KOG2869">
    <property type="taxonomic scope" value="Eukaryota"/>
</dbReference>
<dbReference type="GeneTree" id="ENSGT00390000016326"/>
<dbReference type="HOGENOM" id="CLU_023334_3_1_1"/>
<dbReference type="InParanoid" id="P48612"/>
<dbReference type="OMA" id="DDLWHLK"/>
<dbReference type="OrthoDB" id="10249111at2759"/>
<dbReference type="PhylomeDB" id="P48612"/>
<dbReference type="SignaLink" id="P48612"/>
<dbReference type="BioGRID-ORCS" id="34286">
    <property type="hits" value="1 hit in 1 CRISPR screen"/>
</dbReference>
<dbReference type="GenomeRNAi" id="34286"/>
<dbReference type="PRO" id="PR:P48612"/>
<dbReference type="Proteomes" id="UP000000803">
    <property type="component" value="Chromosome 2L"/>
</dbReference>
<dbReference type="Bgee" id="FBgn0011207">
    <property type="expression patterns" value="Expressed in cleaving embryo and 120 other cell types or tissues"/>
</dbReference>
<dbReference type="GO" id="GO:0005737">
    <property type="term" value="C:cytoplasm"/>
    <property type="evidence" value="ECO:0000314"/>
    <property type="project" value="FlyBase"/>
</dbReference>
<dbReference type="GO" id="GO:0005829">
    <property type="term" value="C:cytosol"/>
    <property type="evidence" value="ECO:0000305"/>
    <property type="project" value="FlyBase"/>
</dbReference>
<dbReference type="GO" id="GO:1990533">
    <property type="term" value="C:Dom34-Hbs1 complex"/>
    <property type="evidence" value="ECO:0000353"/>
    <property type="project" value="FlyBase"/>
</dbReference>
<dbReference type="GO" id="GO:0005634">
    <property type="term" value="C:nucleus"/>
    <property type="evidence" value="ECO:0000314"/>
    <property type="project" value="FlyBase"/>
</dbReference>
<dbReference type="GO" id="GO:0046872">
    <property type="term" value="F:metal ion binding"/>
    <property type="evidence" value="ECO:0007669"/>
    <property type="project" value="UniProtKB-KW"/>
</dbReference>
<dbReference type="GO" id="GO:0004521">
    <property type="term" value="F:RNA endonuclease activity"/>
    <property type="evidence" value="ECO:0000250"/>
    <property type="project" value="FlyBase"/>
</dbReference>
<dbReference type="GO" id="GO:0001745">
    <property type="term" value="P:compound eye morphogenesis"/>
    <property type="evidence" value="ECO:0000315"/>
    <property type="project" value="FlyBase"/>
</dbReference>
<dbReference type="GO" id="GO:0048132">
    <property type="term" value="P:female germ-line stem cell asymmetric division"/>
    <property type="evidence" value="ECO:0000315"/>
    <property type="project" value="FlyBase"/>
</dbReference>
<dbReference type="GO" id="GO:0030718">
    <property type="term" value="P:germ-line stem cell population maintenance"/>
    <property type="evidence" value="ECO:0000315"/>
    <property type="project" value="FlyBase"/>
</dbReference>
<dbReference type="GO" id="GO:0036098">
    <property type="term" value="P:male germ-line stem cell population maintenance"/>
    <property type="evidence" value="ECO:0000315"/>
    <property type="project" value="FlyBase"/>
</dbReference>
<dbReference type="GO" id="GO:0051321">
    <property type="term" value="P:meiotic cell cycle"/>
    <property type="evidence" value="ECO:0000315"/>
    <property type="project" value="FlyBase"/>
</dbReference>
<dbReference type="GO" id="GO:0051078">
    <property type="term" value="P:meiotic nuclear membrane disassembly"/>
    <property type="evidence" value="ECO:0000315"/>
    <property type="project" value="FlyBase"/>
</dbReference>
<dbReference type="GO" id="GO:0000212">
    <property type="term" value="P:meiotic spindle organization"/>
    <property type="evidence" value="ECO:0000315"/>
    <property type="project" value="FlyBase"/>
</dbReference>
<dbReference type="GO" id="GO:0070651">
    <property type="term" value="P:nonfunctional rRNA decay"/>
    <property type="evidence" value="ECO:0000318"/>
    <property type="project" value="GO_Central"/>
</dbReference>
<dbReference type="GO" id="GO:0070966">
    <property type="term" value="P:nuclear-transcribed mRNA catabolic process, no-go decay"/>
    <property type="evidence" value="ECO:0000318"/>
    <property type="project" value="GO_Central"/>
</dbReference>
<dbReference type="GO" id="GO:0070481">
    <property type="term" value="P:nuclear-transcribed mRNA catabolic process, non-stop decay"/>
    <property type="evidence" value="ECO:0007669"/>
    <property type="project" value="InterPro"/>
</dbReference>
<dbReference type="GO" id="GO:0016441">
    <property type="term" value="P:post-transcriptional gene silencing"/>
    <property type="evidence" value="ECO:0000315"/>
    <property type="project" value="FlyBase"/>
</dbReference>
<dbReference type="GO" id="GO:0006417">
    <property type="term" value="P:regulation of translation"/>
    <property type="evidence" value="ECO:0007669"/>
    <property type="project" value="UniProtKB-KW"/>
</dbReference>
<dbReference type="GO" id="GO:0072344">
    <property type="term" value="P:rescue of stalled ribosome"/>
    <property type="evidence" value="ECO:0000316"/>
    <property type="project" value="FlyBase"/>
</dbReference>
<dbReference type="GO" id="GO:0032790">
    <property type="term" value="P:ribosome disassembly"/>
    <property type="evidence" value="ECO:0000318"/>
    <property type="project" value="GO_Central"/>
</dbReference>
<dbReference type="GO" id="GO:0071025">
    <property type="term" value="P:RNA surveillance"/>
    <property type="evidence" value="ECO:0007669"/>
    <property type="project" value="InterPro"/>
</dbReference>
<dbReference type="GO" id="GO:0007291">
    <property type="term" value="P:sperm individualization"/>
    <property type="evidence" value="ECO:0000316"/>
    <property type="project" value="UniProtKB"/>
</dbReference>
<dbReference type="GO" id="GO:0048137">
    <property type="term" value="P:spermatocyte division"/>
    <property type="evidence" value="ECO:0000315"/>
    <property type="project" value="FlyBase"/>
</dbReference>
<dbReference type="FunFam" id="2.30.30.870:FF:000001">
    <property type="entry name" value="Protein pelota homolog"/>
    <property type="match status" value="1"/>
</dbReference>
<dbReference type="FunFam" id="3.30.1330.30:FF:000008">
    <property type="entry name" value="Protein pelota homolog"/>
    <property type="match status" value="1"/>
</dbReference>
<dbReference type="FunFam" id="3.30.420.60:FF:000002">
    <property type="entry name" value="Protein pelota homolog"/>
    <property type="match status" value="1"/>
</dbReference>
<dbReference type="Gene3D" id="3.30.1330.30">
    <property type="match status" value="1"/>
</dbReference>
<dbReference type="Gene3D" id="3.30.420.60">
    <property type="entry name" value="eRF1 domain 2"/>
    <property type="match status" value="1"/>
</dbReference>
<dbReference type="Gene3D" id="2.30.30.870">
    <property type="entry name" value="Pelota, domain A"/>
    <property type="match status" value="1"/>
</dbReference>
<dbReference type="InterPro" id="IPR042226">
    <property type="entry name" value="eFR1_2_sf"/>
</dbReference>
<dbReference type="InterPro" id="IPR005140">
    <property type="entry name" value="eRF1_1_Pelota"/>
</dbReference>
<dbReference type="InterPro" id="IPR005141">
    <property type="entry name" value="eRF1_2"/>
</dbReference>
<dbReference type="InterPro" id="IPR005142">
    <property type="entry name" value="eRF1_3"/>
</dbReference>
<dbReference type="InterPro" id="IPR038069">
    <property type="entry name" value="Pelota/DOM34_N"/>
</dbReference>
<dbReference type="InterPro" id="IPR029064">
    <property type="entry name" value="Ribosomal_eL30-like_sf"/>
</dbReference>
<dbReference type="InterPro" id="IPR004405">
    <property type="entry name" value="Transl-rel_pelota"/>
</dbReference>
<dbReference type="NCBIfam" id="TIGR00111">
    <property type="entry name" value="pelota"/>
    <property type="match status" value="1"/>
</dbReference>
<dbReference type="PANTHER" id="PTHR10853">
    <property type="entry name" value="PELOTA"/>
    <property type="match status" value="1"/>
</dbReference>
<dbReference type="PANTHER" id="PTHR10853:SF0">
    <property type="entry name" value="PROTEIN PELOTA HOMOLOG"/>
    <property type="match status" value="1"/>
</dbReference>
<dbReference type="Pfam" id="PF03463">
    <property type="entry name" value="eRF1_1"/>
    <property type="match status" value="1"/>
</dbReference>
<dbReference type="Pfam" id="PF03464">
    <property type="entry name" value="eRF1_2"/>
    <property type="match status" value="1"/>
</dbReference>
<dbReference type="Pfam" id="PF03465">
    <property type="entry name" value="eRF1_3"/>
    <property type="match status" value="1"/>
</dbReference>
<dbReference type="SMART" id="SM01194">
    <property type="entry name" value="eRF1_1"/>
    <property type="match status" value="1"/>
</dbReference>
<dbReference type="SUPFAM" id="SSF159065">
    <property type="entry name" value="Dom34/Pelota N-terminal domain-like"/>
    <property type="match status" value="1"/>
</dbReference>
<dbReference type="SUPFAM" id="SSF55315">
    <property type="entry name" value="L30e-like"/>
    <property type="match status" value="1"/>
</dbReference>
<dbReference type="SUPFAM" id="SSF53137">
    <property type="entry name" value="Translational machinery components"/>
    <property type="match status" value="1"/>
</dbReference>
<accession>P48612</accession>
<accession>Q9VL97</accession>